<name>FOLCP_HALVD</name>
<accession>D4GW05</accession>
<accession>Q6B7M6</accession>
<proteinExistence type="inferred from homology"/>
<dbReference type="EC" id="6.3.2.17"/>
<dbReference type="EC" id="2.5.1.15"/>
<dbReference type="EMBL" id="AY676165">
    <property type="protein sequence ID" value="AAT77678.1"/>
    <property type="molecule type" value="Genomic_DNA"/>
</dbReference>
<dbReference type="EMBL" id="CP001956">
    <property type="protein sequence ID" value="ADE02963.1"/>
    <property type="molecule type" value="Genomic_DNA"/>
</dbReference>
<dbReference type="EMBL" id="AOHU01000092">
    <property type="protein sequence ID" value="ELY27524.1"/>
    <property type="molecule type" value="Genomic_DNA"/>
</dbReference>
<dbReference type="RefSeq" id="WP_004043850.1">
    <property type="nucleotide sequence ID" value="NC_013967.1"/>
</dbReference>
<dbReference type="SMR" id="D4GW05"/>
<dbReference type="STRING" id="309800.HVO_1088"/>
<dbReference type="PaxDb" id="309800-C498_13314"/>
<dbReference type="EnsemblBacteria" id="ADE02963">
    <property type="protein sequence ID" value="ADE02963"/>
    <property type="gene ID" value="HVO_1088"/>
</dbReference>
<dbReference type="GeneID" id="8924871"/>
<dbReference type="KEGG" id="hvo:HVO_1088"/>
<dbReference type="PATRIC" id="fig|309800.29.peg.2554"/>
<dbReference type="eggNOG" id="arCOG02817">
    <property type="taxonomic scope" value="Archaea"/>
</dbReference>
<dbReference type="HOGENOM" id="CLU_017222_0_0_2"/>
<dbReference type="OrthoDB" id="75177at2157"/>
<dbReference type="UniPathway" id="UPA00077">
    <property type="reaction ID" value="UER00156"/>
</dbReference>
<dbReference type="UniPathway" id="UPA00850"/>
<dbReference type="Proteomes" id="UP000008243">
    <property type="component" value="Chromosome"/>
</dbReference>
<dbReference type="Proteomes" id="UP000011532">
    <property type="component" value="Unassembled WGS sequence"/>
</dbReference>
<dbReference type="GO" id="GO:0005524">
    <property type="term" value="F:ATP binding"/>
    <property type="evidence" value="ECO:0007669"/>
    <property type="project" value="UniProtKB-KW"/>
</dbReference>
<dbReference type="GO" id="GO:0004156">
    <property type="term" value="F:dihydropteroate synthase activity"/>
    <property type="evidence" value="ECO:0007669"/>
    <property type="project" value="UniProtKB-EC"/>
</dbReference>
<dbReference type="GO" id="GO:0046872">
    <property type="term" value="F:metal ion binding"/>
    <property type="evidence" value="ECO:0007669"/>
    <property type="project" value="UniProtKB-KW"/>
</dbReference>
<dbReference type="GO" id="GO:0004326">
    <property type="term" value="F:tetrahydrofolylpolyglutamate synthase activity"/>
    <property type="evidence" value="ECO:0007669"/>
    <property type="project" value="UniProtKB-EC"/>
</dbReference>
<dbReference type="GO" id="GO:0046656">
    <property type="term" value="P:folic acid biosynthetic process"/>
    <property type="evidence" value="ECO:0007669"/>
    <property type="project" value="UniProtKB-KW"/>
</dbReference>
<dbReference type="GO" id="GO:0046654">
    <property type="term" value="P:tetrahydrofolate biosynthetic process"/>
    <property type="evidence" value="ECO:0007669"/>
    <property type="project" value="UniProtKB-UniPathway"/>
</dbReference>
<dbReference type="CDD" id="cd00739">
    <property type="entry name" value="DHPS"/>
    <property type="match status" value="1"/>
</dbReference>
<dbReference type="FunFam" id="3.40.1190.10:FF:000011">
    <property type="entry name" value="Folylpolyglutamate synthase/dihydrofolate synthase"/>
    <property type="match status" value="1"/>
</dbReference>
<dbReference type="Gene3D" id="3.20.20.20">
    <property type="entry name" value="Dihydropteroate synthase-like"/>
    <property type="match status" value="1"/>
</dbReference>
<dbReference type="Gene3D" id="3.90.190.20">
    <property type="entry name" value="Mur ligase, C-terminal domain"/>
    <property type="match status" value="1"/>
</dbReference>
<dbReference type="Gene3D" id="3.40.1190.10">
    <property type="entry name" value="Mur-like, catalytic domain"/>
    <property type="match status" value="1"/>
</dbReference>
<dbReference type="InterPro" id="IPR045031">
    <property type="entry name" value="DHP_synth-like"/>
</dbReference>
<dbReference type="InterPro" id="IPR006390">
    <property type="entry name" value="DHP_synth_dom"/>
</dbReference>
<dbReference type="InterPro" id="IPR011005">
    <property type="entry name" value="Dihydropteroate_synth-like_sf"/>
</dbReference>
<dbReference type="InterPro" id="IPR001645">
    <property type="entry name" value="Folylpolyglutamate_synth"/>
</dbReference>
<dbReference type="InterPro" id="IPR036565">
    <property type="entry name" value="Mur-like_cat_sf"/>
</dbReference>
<dbReference type="InterPro" id="IPR004101">
    <property type="entry name" value="Mur_ligase_C"/>
</dbReference>
<dbReference type="InterPro" id="IPR036615">
    <property type="entry name" value="Mur_ligase_C_dom_sf"/>
</dbReference>
<dbReference type="InterPro" id="IPR013221">
    <property type="entry name" value="Mur_ligase_cen"/>
</dbReference>
<dbReference type="InterPro" id="IPR000489">
    <property type="entry name" value="Pterin-binding_dom"/>
</dbReference>
<dbReference type="NCBIfam" id="TIGR01496">
    <property type="entry name" value="DHPS"/>
    <property type="match status" value="1"/>
</dbReference>
<dbReference type="NCBIfam" id="TIGR01499">
    <property type="entry name" value="folC"/>
    <property type="match status" value="1"/>
</dbReference>
<dbReference type="PANTHER" id="PTHR20941">
    <property type="entry name" value="FOLATE SYNTHESIS PROTEINS"/>
    <property type="match status" value="1"/>
</dbReference>
<dbReference type="PANTHER" id="PTHR20941:SF1">
    <property type="entry name" value="FOLIC ACID SYNTHESIS PROTEIN FOL1"/>
    <property type="match status" value="1"/>
</dbReference>
<dbReference type="Pfam" id="PF02875">
    <property type="entry name" value="Mur_ligase_C"/>
    <property type="match status" value="1"/>
</dbReference>
<dbReference type="Pfam" id="PF08245">
    <property type="entry name" value="Mur_ligase_M"/>
    <property type="match status" value="1"/>
</dbReference>
<dbReference type="Pfam" id="PF00809">
    <property type="entry name" value="Pterin_bind"/>
    <property type="match status" value="1"/>
</dbReference>
<dbReference type="SUPFAM" id="SSF51717">
    <property type="entry name" value="Dihydropteroate synthetase-like"/>
    <property type="match status" value="1"/>
</dbReference>
<dbReference type="SUPFAM" id="SSF53623">
    <property type="entry name" value="MurD-like peptide ligases, catalytic domain"/>
    <property type="match status" value="1"/>
</dbReference>
<dbReference type="SUPFAM" id="SSF53244">
    <property type="entry name" value="MurD-like peptide ligases, peptide-binding domain"/>
    <property type="match status" value="1"/>
</dbReference>
<dbReference type="PROSITE" id="PS00792">
    <property type="entry name" value="DHPS_1"/>
    <property type="match status" value="1"/>
</dbReference>
<dbReference type="PROSITE" id="PS00793">
    <property type="entry name" value="DHPS_2"/>
    <property type="match status" value="1"/>
</dbReference>
<dbReference type="PROSITE" id="PS50972">
    <property type="entry name" value="PTERIN_BINDING"/>
    <property type="match status" value="1"/>
</dbReference>
<gene>
    <name type="primary">folCP</name>
    <name type="synonym">folC-P</name>
    <name type="ordered locus">HVO_1088</name>
    <name type="ORF">C498_13314</name>
</gene>
<sequence length="838" mass="89156">MEYHEAVNFLFDLRRFQVKPGTESIRRLLSHLGDPHEGVSFVQVAGSNGKGSTARMVDAMLRESGAHVGLYTSPHFDDVRERVRVDGRKIPKSALSAFVAEAKPYLVERAADGEPLTFFETVTALALWYFDRAGVDVAVLEVGMGGELDATSAVDPVASAVTNVSLEHTAVLGDTVAEIAKTKAAVAPADAPLVTGTTGEALSVIREEAGDVLTVGDADADSDADVRVSYGGRVNHQEAAVTVETDAETLDVRIPLLGAYQARNAGIAVSLARQVRPDIDAEAIHRGLRNAHWPGRFEVMGTEPTVVLDGAHNPDACAQVATVLDEFDYDDLHLVYGAMHDKDHGEMVGALPEVASVVTCKADISRGEDPEILSSVFERLNGPAVETGGAVAAALDRARARADPDDCVLVVGSLYVVAEARTTWTRAVVPKTHRTLDDARRTLDRANVADAAERSERARRAVNRTVHTRVQRRQARVLREELLSVGGDCAVSGHEFGGELVDVVLTGTLDQFERLTAALEDPPYALAGVAAEIRETLDIEAADAGEDDERGAGDASDAGHDDYPWNDGTAVMGILNVTPNSFHDGGEFYDIDDAVEQARAMVDAGVDIIDVGGESTRPGADEVPVDEEIRRVAPVIEAIADLDVLVSVDTRKAAVGAAALDAGADILNDVTGLEDPEMRFLAAERGAPVIVMHSIDAPVDPSREVDYDDVVEDVIDELTELVLLAEKAGIPRRNLIVDPGLGFGKSKAENFELLGRTDEFAALGCPILVGHSHKSMFSLVGEEPGDNLAATVAGTAIAADRGADIVRVHDVPENVAAVNVALASRDPNRFEADAERED</sequence>
<keyword id="KW-0067">ATP-binding</keyword>
<keyword id="KW-0289">Folate biosynthesis</keyword>
<keyword id="KW-0436">Ligase</keyword>
<keyword id="KW-0460">Magnesium</keyword>
<keyword id="KW-0479">Metal-binding</keyword>
<keyword id="KW-0511">Multifunctional enzyme</keyword>
<keyword id="KW-0547">Nucleotide-binding</keyword>
<keyword id="KW-1185">Reference proteome</keyword>
<keyword id="KW-0808">Transferase</keyword>
<protein>
    <recommendedName>
        <fullName>Probable bifunctional folylpolyglutamate synthase/dihydropteroate synthase</fullName>
    </recommendedName>
    <domain>
        <recommendedName>
            <fullName>Probable folylpolyglutamate synthase</fullName>
            <ecNumber>6.3.2.17</ecNumber>
        </recommendedName>
        <alternativeName>
            <fullName>Tetrahydrofolylpolyglutamate synthase</fullName>
            <shortName>Tetrahydrofolate synthase</shortName>
        </alternativeName>
    </domain>
    <domain>
        <recommendedName>
            <fullName>Probable dihydropteroate synthase</fullName>
            <shortName>DHPS</shortName>
            <ecNumber>2.5.1.15</ecNumber>
        </recommendedName>
        <alternativeName>
            <fullName>Dihydropteroate pyrophosphorylase</fullName>
        </alternativeName>
    </domain>
</protein>
<evidence type="ECO:0000250" key="1"/>
<evidence type="ECO:0000250" key="2">
    <source>
        <dbReference type="UniProtKB" id="P0AC13"/>
    </source>
</evidence>
<evidence type="ECO:0000250" key="3">
    <source>
        <dbReference type="UniProtKB" id="P9WND1"/>
    </source>
</evidence>
<evidence type="ECO:0000255" key="4">
    <source>
        <dbReference type="PROSITE-ProRule" id="PRU00334"/>
    </source>
</evidence>
<evidence type="ECO:0000256" key="5">
    <source>
        <dbReference type="SAM" id="MobiDB-lite"/>
    </source>
</evidence>
<evidence type="ECO:0000269" key="6">
    <source>
    </source>
</evidence>
<evidence type="ECO:0000305" key="7"/>
<organism>
    <name type="scientific">Haloferax volcanii (strain ATCC 29605 / DSM 3757 / JCM 8879 / NBRC 14742 / NCIMB 2012 / VKM B-1768 / DS2)</name>
    <name type="common">Halobacterium volcanii</name>
    <dbReference type="NCBI Taxonomy" id="309800"/>
    <lineage>
        <taxon>Archaea</taxon>
        <taxon>Methanobacteriati</taxon>
        <taxon>Methanobacteriota</taxon>
        <taxon>Stenosarchaea group</taxon>
        <taxon>Halobacteria</taxon>
        <taxon>Halobacteriales</taxon>
        <taxon>Haloferacaceae</taxon>
        <taxon>Haloferax</taxon>
    </lineage>
</organism>
<comment type="function">
    <text evidence="6">Can complement an H.volcanii mutant strain that is thymidine auxotroph because it lacks the two dihydrofolate reductase genes encoded by hdrA and hdrB.</text>
</comment>
<comment type="catalytic activity">
    <reaction>
        <text>(6S)-5,6,7,8-tetrahydrofolyl-(gamma-L-Glu)(n) + L-glutamate + ATP = (6S)-5,6,7,8-tetrahydrofolyl-(gamma-L-Glu)(n+1) + ADP + phosphate + H(+)</text>
        <dbReference type="Rhea" id="RHEA:10580"/>
        <dbReference type="Rhea" id="RHEA-COMP:14738"/>
        <dbReference type="Rhea" id="RHEA-COMP:14740"/>
        <dbReference type="ChEBI" id="CHEBI:15378"/>
        <dbReference type="ChEBI" id="CHEBI:29985"/>
        <dbReference type="ChEBI" id="CHEBI:30616"/>
        <dbReference type="ChEBI" id="CHEBI:43474"/>
        <dbReference type="ChEBI" id="CHEBI:141005"/>
        <dbReference type="ChEBI" id="CHEBI:456216"/>
        <dbReference type="EC" id="6.3.2.17"/>
    </reaction>
</comment>
<comment type="catalytic activity">
    <reaction>
        <text>(7,8-dihydropterin-6-yl)methyl diphosphate + 4-aminobenzoate = 7,8-dihydropteroate + diphosphate</text>
        <dbReference type="Rhea" id="RHEA:19949"/>
        <dbReference type="ChEBI" id="CHEBI:17836"/>
        <dbReference type="ChEBI" id="CHEBI:17839"/>
        <dbReference type="ChEBI" id="CHEBI:33019"/>
        <dbReference type="ChEBI" id="CHEBI:72950"/>
        <dbReference type="EC" id="2.5.1.15"/>
    </reaction>
</comment>
<comment type="cofactor">
    <cofactor evidence="2">
        <name>Mg(2+)</name>
        <dbReference type="ChEBI" id="CHEBI:18420"/>
    </cofactor>
</comment>
<comment type="pathway">
    <text>Cofactor biosynthesis; tetrahydrofolylpolyglutamate biosynthesis.</text>
</comment>
<comment type="pathway">
    <text>Cofactor biosynthesis; tetrahydrofolate biosynthesis; 7,8-dihydrofolate from 2-amino-4-hydroxy-6-hydroxymethyl-7,8-dihydropteridine diphosphate and 4-aminobenzoate: step 1/2.</text>
</comment>
<comment type="similarity">
    <text evidence="7">In the N-terminal section; belongs to the folylpolyglutamate synthase family.</text>
</comment>
<comment type="similarity">
    <text evidence="7">In the C-terminal section; belongs to the DHPS family.</text>
</comment>
<feature type="chain" id="PRO_0000428787" description="Probable bifunctional folylpolyglutamate synthase/dihydropteroate synthase">
    <location>
        <begin position="1"/>
        <end position="838"/>
    </location>
</feature>
<feature type="domain" description="Pterin-binding" evidence="4">
    <location>
        <begin position="569"/>
        <end position="819"/>
    </location>
</feature>
<feature type="region of interest" description="Folylpolyglutamate synthase">
    <location>
        <begin position="1"/>
        <end position="418"/>
    </location>
</feature>
<feature type="region of interest" description="Disordered" evidence="5">
    <location>
        <begin position="541"/>
        <end position="561"/>
    </location>
</feature>
<feature type="region of interest" description="DHPS">
    <location>
        <begin position="571"/>
        <end position="838"/>
    </location>
</feature>
<feature type="binding site" evidence="1">
    <location>
        <begin position="46"/>
        <end position="52"/>
    </location>
    <ligand>
        <name>ATP</name>
        <dbReference type="ChEBI" id="CHEBI:30616"/>
    </ligand>
</feature>
<feature type="binding site" evidence="3">
    <location>
        <position position="576"/>
    </location>
    <ligand>
        <name>Mg(2+)</name>
        <dbReference type="ChEBI" id="CHEBI:18420"/>
    </ligand>
</feature>
<feature type="binding site" evidence="2">
    <location>
        <position position="616"/>
    </location>
    <ligand>
        <name>(7,8-dihydropterin-6-yl)methyl diphosphate</name>
        <dbReference type="ChEBI" id="CHEBI:72950"/>
    </ligand>
</feature>
<feature type="binding site" evidence="2">
    <location>
        <position position="649"/>
    </location>
    <ligand>
        <name>(7,8-dihydropterin-6-yl)methyl diphosphate</name>
        <dbReference type="ChEBI" id="CHEBI:72950"/>
    </ligand>
</feature>
<feature type="binding site" evidence="2">
    <location>
        <position position="668"/>
    </location>
    <ligand>
        <name>(7,8-dihydropterin-6-yl)methyl diphosphate</name>
        <dbReference type="ChEBI" id="CHEBI:72950"/>
    </ligand>
</feature>
<feature type="binding site" evidence="2">
    <location>
        <position position="738"/>
    </location>
    <ligand>
        <name>(7,8-dihydropterin-6-yl)methyl diphosphate</name>
        <dbReference type="ChEBI" id="CHEBI:72950"/>
    </ligand>
</feature>
<feature type="binding site" evidence="2">
    <location>
        <position position="774"/>
    </location>
    <ligand>
        <name>(7,8-dihydropterin-6-yl)methyl diphosphate</name>
        <dbReference type="ChEBI" id="CHEBI:72950"/>
    </ligand>
</feature>
<feature type="binding site" evidence="2">
    <location>
        <begin position="807"/>
        <end position="809"/>
    </location>
    <ligand>
        <name>(7,8-dihydropterin-6-yl)methyl diphosphate</name>
        <dbReference type="ChEBI" id="CHEBI:72950"/>
    </ligand>
</feature>
<feature type="sequence conflict" description="In Ref. 1; AAT77678." evidence="7" ref="1">
    <original>VGSLYVVA</original>
    <variation>AGSLNVVT</variation>
    <location>
        <begin position="411"/>
        <end position="418"/>
    </location>
</feature>
<feature type="sequence conflict" description="In Ref. 1; AAT77678." evidence="7" ref="1">
    <original>PKTHRTLDDAR</original>
    <variation>QKTPRTLEDAG</variation>
    <location>
        <begin position="430"/>
        <end position="440"/>
    </location>
</feature>
<reference key="1">
    <citation type="journal article" date="2004" name="Mol. Microbiol.">
        <title>An alternative pathway for reduced folate biosynthesis in bacteria and halophilic archaea.</title>
        <authorList>
            <person name="Levin I."/>
            <person name="Giladi M."/>
            <person name="Altman-Price N."/>
            <person name="Ortenberg R."/>
            <person name="Mevarech M."/>
        </authorList>
    </citation>
    <scope>NUCLEOTIDE SEQUENCE [GENOMIC DNA]</scope>
    <scope>FUNCTION</scope>
    <source>
        <strain>DS2 / DSM 5716 / WFD11</strain>
    </source>
</reference>
<reference key="2">
    <citation type="journal article" date="2010" name="PLoS ONE">
        <title>The complete genome sequence of Haloferax volcanii DS2, a model archaeon.</title>
        <authorList>
            <person name="Hartman A.L."/>
            <person name="Norais C."/>
            <person name="Badger J.H."/>
            <person name="Delmas S."/>
            <person name="Haldenby S."/>
            <person name="Madupu R."/>
            <person name="Robinson J."/>
            <person name="Khouri H."/>
            <person name="Ren Q."/>
            <person name="Lowe T.M."/>
            <person name="Maupin-Furlow J."/>
            <person name="Pohlschroder M."/>
            <person name="Daniels C."/>
            <person name="Pfeiffer F."/>
            <person name="Allers T."/>
            <person name="Eisen J.A."/>
        </authorList>
    </citation>
    <scope>NUCLEOTIDE SEQUENCE [LARGE SCALE GENOMIC DNA]</scope>
    <source>
        <strain>ATCC 29605 / DSM 3757 / JCM 8879 / NBRC 14742 / NCIMB 2012 / VKM B-1768 / DS2</strain>
    </source>
</reference>
<reference key="3">
    <citation type="journal article" date="2014" name="PLoS Genet.">
        <title>Phylogenetically driven sequencing of extremely halophilic archaea reveals strategies for static and dynamic osmo-response.</title>
        <authorList>
            <person name="Becker E.A."/>
            <person name="Seitzer P.M."/>
            <person name="Tritt A."/>
            <person name="Larsen D."/>
            <person name="Krusor M."/>
            <person name="Yao A.I."/>
            <person name="Wu D."/>
            <person name="Madern D."/>
            <person name="Eisen J.A."/>
            <person name="Darling A.E."/>
            <person name="Facciotti M.T."/>
        </authorList>
    </citation>
    <scope>NUCLEOTIDE SEQUENCE [LARGE SCALE GENOMIC DNA]</scope>
    <source>
        <strain>ATCC 29605 / DSM 3757 / JCM 8879 / NBRC 14742 / NCIMB 2012 / VKM B-1768 / DS2</strain>
    </source>
</reference>